<evidence type="ECO:0000250" key="1"/>
<evidence type="ECO:0000250" key="2">
    <source>
        <dbReference type="UniProtKB" id="P08476"/>
    </source>
</evidence>
<evidence type="ECO:0000255" key="3"/>
<evidence type="ECO:0000256" key="4">
    <source>
        <dbReference type="SAM" id="MobiDB-lite"/>
    </source>
</evidence>
<evidence type="ECO:0000269" key="5">
    <source>
    </source>
</evidence>
<evidence type="ECO:0000305" key="6"/>
<name>INHBA_PIG</name>
<comment type="function">
    <text evidence="2">Inhibins/activins are involved in regulating a number of diverse functions such as hypothalamic and pituitary hormone secretion, gonadal hormone secretion, germ cell development and maturation, erythroid differentiation, insulin secretion, nerve cell survival, embryonic axial development or bone growth, depending on their subunit composition.</text>
</comment>
<comment type="function">
    <text evidence="2">Activin A is a homodimer of INHBA that plays a role in several essential biological processes including embryonic development, stem cell maintenance and differentiation, haematopoiesis, cell proliferation and tissue fibrosis. Signals through type I (such as ACVR1B or ACVR1C) and type II receptors (such as ACVR2A, ACVR2B or BMPR2) which, upon ligand binding, phosphorylate SMAD2 and SMAD3 intracellular signaling mediators that form a complex with SMAD4, translocate to the nucleus and modulate gene expression. Can also activate alternative non-canonical intracellular signaling pathways including the p38 MAPK, extracellular signal-regulated kinases 1/2 (ERK1/2) and c-Jun N-terminal kinases (JNKs) to modulate cell migration and differentiation. Alternatively, promotes osteoblastic differentiation via ACVRL1-SMAD1/5/9 pathway. In addition, can engage the type I receptor ACVR1 to form an ACVR1-activin A-type II receptor non-signaling complex (NSC) that renders receptors unavailable for engagement with BMPs, hence resulting in an apparent inhibition of ACVR1-mediated BMP signaling.</text>
</comment>
<comment type="function">
    <text evidence="2">Inhibin A is a dimer of alpha/INHA and beta-A/INHBA that functions as a feedback regulator in the hypothalamic-pituitary-gonadal (HPG) axis. Inhibits the secretion of FSH from the anterior pituitary gland by acting on pituitary gonadotrope cells. Antagonizes activin A by binding to the proteoglycan, betaglycan, and forming a stable complex with and, thereby, sequestering type II activin receptors while excluding type I receptor.</text>
</comment>
<comment type="subunit">
    <text evidence="2">Dimeric, linked by one or more disulfide bonds. Inhibin A is a dimer of alpha/INHA and beta-A/INHBA. Activin A is a homodimer of beta-A/INHBA. Activin AB is a dimer of beta-A/INHBA and beta-B/INHBB. Interacts with FST and FSTL3; these interactions prevent activin A interaction to its type II receptor. Activin A interacts with ACVR2A. Activin A interacts with BMPR2. Inhibin A interacts with ACVR1; this interaction creates a non-signaling complex (NSC) that inhibits ACVR1-mediated BMP signaling. Inhibin A interacts with ACVR2A.</text>
</comment>
<comment type="subcellular location">
    <subcellularLocation>
        <location evidence="2">Secreted</location>
    </subcellularLocation>
</comment>
<comment type="similarity">
    <text evidence="6">Belongs to the TGF-beta family.</text>
</comment>
<dbReference type="EMBL" id="X03266">
    <property type="protein sequence ID" value="CAA27020.1"/>
    <property type="molecule type" value="mRNA"/>
</dbReference>
<dbReference type="PIR" id="A01393">
    <property type="entry name" value="WFPGBA"/>
</dbReference>
<dbReference type="RefSeq" id="NP_001421819.1">
    <property type="nucleotide sequence ID" value="NM_001434890.1"/>
</dbReference>
<dbReference type="RefSeq" id="NP_999193.1">
    <property type="nucleotide sequence ID" value="NM_214028.1"/>
</dbReference>
<dbReference type="SMR" id="P03970"/>
<dbReference type="FunCoup" id="P03970">
    <property type="interactions" value="381"/>
</dbReference>
<dbReference type="STRING" id="9823.ENSSSCP00000051495"/>
<dbReference type="GlyCosmos" id="P03970">
    <property type="glycosylation" value="1 site, No reported glycans"/>
</dbReference>
<dbReference type="GlyGen" id="P03970">
    <property type="glycosylation" value="2 sites"/>
</dbReference>
<dbReference type="PaxDb" id="9823-ENSSSCP00000024268"/>
<dbReference type="Ensembl" id="ENSSSCT00000061917.2">
    <property type="protein sequence ID" value="ENSSSCP00000051495.1"/>
    <property type="gene ID" value="ENSSSCG00000035077.2"/>
</dbReference>
<dbReference type="Ensembl" id="ENSSSCT00035052174.1">
    <property type="protein sequence ID" value="ENSSSCP00035020976.1"/>
    <property type="gene ID" value="ENSSSCG00035039272.1"/>
</dbReference>
<dbReference type="Ensembl" id="ENSSSCT00045027248.1">
    <property type="protein sequence ID" value="ENSSSCP00045018828.1"/>
    <property type="gene ID" value="ENSSSCG00045016024.1"/>
</dbReference>
<dbReference type="Ensembl" id="ENSSSCT00050031095.1">
    <property type="protein sequence ID" value="ENSSSCP00050012980.1"/>
    <property type="gene ID" value="ENSSSCG00050023033.1"/>
</dbReference>
<dbReference type="Ensembl" id="ENSSSCT00055008466.1">
    <property type="protein sequence ID" value="ENSSSCP00055006693.1"/>
    <property type="gene ID" value="ENSSSCG00055004286.1"/>
</dbReference>
<dbReference type="Ensembl" id="ENSSSCT00070034789.1">
    <property type="protein sequence ID" value="ENSSSCP00070029068.1"/>
    <property type="gene ID" value="ENSSSCG00070017615.1"/>
</dbReference>
<dbReference type="Ensembl" id="ENSSSCT00070034795.1">
    <property type="protein sequence ID" value="ENSSSCP00070029074.1"/>
    <property type="gene ID" value="ENSSSCG00070017615.1"/>
</dbReference>
<dbReference type="Ensembl" id="ENSSSCT00090001584">
    <property type="protein sequence ID" value="ENSSSCP00090000839"/>
    <property type="gene ID" value="ENSSSCG00090001044"/>
</dbReference>
<dbReference type="Ensembl" id="ENSSSCT00105077235">
    <property type="protein sequence ID" value="ENSSSCP00105054650"/>
    <property type="gene ID" value="ENSSSCG00105040526"/>
</dbReference>
<dbReference type="Ensembl" id="ENSSSCT00110071551">
    <property type="protein sequence ID" value="ENSSSCP00110050349"/>
    <property type="gene ID" value="ENSSSCG00110037656"/>
</dbReference>
<dbReference type="Ensembl" id="ENSSSCT00115025502">
    <property type="protein sequence ID" value="ENSSSCP00115024155"/>
    <property type="gene ID" value="ENSSSCG00115014722"/>
</dbReference>
<dbReference type="GeneID" id="397093"/>
<dbReference type="KEGG" id="ssc:397093"/>
<dbReference type="CTD" id="3624"/>
<dbReference type="VGNC" id="VGNC:89133">
    <property type="gene designation" value="INHBA"/>
</dbReference>
<dbReference type="eggNOG" id="KOG3900">
    <property type="taxonomic scope" value="Eukaryota"/>
</dbReference>
<dbReference type="GeneTree" id="ENSGT00940000157116"/>
<dbReference type="InParanoid" id="P03970"/>
<dbReference type="OMA" id="CCKKHFY"/>
<dbReference type="OrthoDB" id="6516235at2759"/>
<dbReference type="Reactome" id="R-SSC-1502540">
    <property type="pathway name" value="Signaling by Activin"/>
</dbReference>
<dbReference type="Reactome" id="R-SSC-201451">
    <property type="pathway name" value="Signaling by BMP"/>
</dbReference>
<dbReference type="Reactome" id="R-SSC-209822">
    <property type="pathway name" value="Glycoprotein hormones"/>
</dbReference>
<dbReference type="Reactome" id="R-SSC-2473224">
    <property type="pathway name" value="Antagonism of Activin by Follistatin"/>
</dbReference>
<dbReference type="Reactome" id="R-SSC-9839406">
    <property type="pathway name" value="TGFBR3 regulates activin signaling"/>
</dbReference>
<dbReference type="Proteomes" id="UP000008227">
    <property type="component" value="Chromosome 18"/>
</dbReference>
<dbReference type="Proteomes" id="UP000314985">
    <property type="component" value="Chromosome 18"/>
</dbReference>
<dbReference type="Proteomes" id="UP000694570">
    <property type="component" value="Unplaced"/>
</dbReference>
<dbReference type="Proteomes" id="UP000694571">
    <property type="component" value="Unplaced"/>
</dbReference>
<dbReference type="Proteomes" id="UP000694720">
    <property type="component" value="Unplaced"/>
</dbReference>
<dbReference type="Proteomes" id="UP000694722">
    <property type="component" value="Unplaced"/>
</dbReference>
<dbReference type="Proteomes" id="UP000694723">
    <property type="component" value="Unplaced"/>
</dbReference>
<dbReference type="Proteomes" id="UP000694724">
    <property type="component" value="Unplaced"/>
</dbReference>
<dbReference type="Proteomes" id="UP000694725">
    <property type="component" value="Unplaced"/>
</dbReference>
<dbReference type="Proteomes" id="UP000694726">
    <property type="component" value="Unplaced"/>
</dbReference>
<dbReference type="Proteomes" id="UP000694727">
    <property type="component" value="Unplaced"/>
</dbReference>
<dbReference type="Proteomes" id="UP000694728">
    <property type="component" value="Unplaced"/>
</dbReference>
<dbReference type="Bgee" id="ENSSSCG00000035077">
    <property type="expression patterns" value="Expressed in granulosa cell and 21 other cell types or tissues"/>
</dbReference>
<dbReference type="GO" id="GO:0043509">
    <property type="term" value="C:activin A complex"/>
    <property type="evidence" value="ECO:0000250"/>
    <property type="project" value="UniProtKB"/>
</dbReference>
<dbReference type="GO" id="GO:0150005">
    <property type="term" value="C:enzyme activator complex"/>
    <property type="evidence" value="ECO:0007669"/>
    <property type="project" value="Ensembl"/>
</dbReference>
<dbReference type="GO" id="GO:0005576">
    <property type="term" value="C:extracellular region"/>
    <property type="evidence" value="ECO:0000250"/>
    <property type="project" value="UniProtKB"/>
</dbReference>
<dbReference type="GO" id="GO:0005615">
    <property type="term" value="C:extracellular space"/>
    <property type="evidence" value="ECO:0000318"/>
    <property type="project" value="GO_Central"/>
</dbReference>
<dbReference type="GO" id="GO:0043512">
    <property type="term" value="C:inhibin A complex"/>
    <property type="evidence" value="ECO:0000250"/>
    <property type="project" value="UniProtKB"/>
</dbReference>
<dbReference type="GO" id="GO:0048471">
    <property type="term" value="C:perinuclear region of cytoplasm"/>
    <property type="evidence" value="ECO:0007669"/>
    <property type="project" value="Ensembl"/>
</dbReference>
<dbReference type="GO" id="GO:0005125">
    <property type="term" value="F:cytokine activity"/>
    <property type="evidence" value="ECO:0000250"/>
    <property type="project" value="UniProtKB"/>
</dbReference>
<dbReference type="GO" id="GO:0008083">
    <property type="term" value="F:growth factor activity"/>
    <property type="evidence" value="ECO:0007669"/>
    <property type="project" value="UniProtKB-KW"/>
</dbReference>
<dbReference type="GO" id="GO:0005179">
    <property type="term" value="F:hormone activity"/>
    <property type="evidence" value="ECO:0007669"/>
    <property type="project" value="UniProtKB-KW"/>
</dbReference>
<dbReference type="GO" id="GO:0042802">
    <property type="term" value="F:identical protein binding"/>
    <property type="evidence" value="ECO:0007669"/>
    <property type="project" value="Ensembl"/>
</dbReference>
<dbReference type="GO" id="GO:0017046">
    <property type="term" value="F:peptide hormone binding"/>
    <property type="evidence" value="ECO:0007669"/>
    <property type="project" value="Ensembl"/>
</dbReference>
<dbReference type="GO" id="GO:0070699">
    <property type="term" value="F:type II activin receptor binding"/>
    <property type="evidence" value="ECO:0007669"/>
    <property type="project" value="Ensembl"/>
</dbReference>
<dbReference type="GO" id="GO:0032924">
    <property type="term" value="P:activin receptor signaling pathway"/>
    <property type="evidence" value="ECO:0000250"/>
    <property type="project" value="UniProtKB"/>
</dbReference>
<dbReference type="GO" id="GO:0008209">
    <property type="term" value="P:androgen metabolic process"/>
    <property type="evidence" value="ECO:0007669"/>
    <property type="project" value="Ensembl"/>
</dbReference>
<dbReference type="GO" id="GO:1903449">
    <property type="term" value="P:androst-4-ene-3,17-dione biosynthetic process"/>
    <property type="evidence" value="ECO:0007669"/>
    <property type="project" value="Ensembl"/>
</dbReference>
<dbReference type="GO" id="GO:0035987">
    <property type="term" value="P:endodermal cell differentiation"/>
    <property type="evidence" value="ECO:0007669"/>
    <property type="project" value="Ensembl"/>
</dbReference>
<dbReference type="GO" id="GO:0097191">
    <property type="term" value="P:extrinsic apoptotic signaling pathway"/>
    <property type="evidence" value="ECO:0007669"/>
    <property type="project" value="Ensembl"/>
</dbReference>
<dbReference type="GO" id="GO:0061029">
    <property type="term" value="P:eyelid development in camera-type eye"/>
    <property type="evidence" value="ECO:0000250"/>
    <property type="project" value="UniProtKB"/>
</dbReference>
<dbReference type="GO" id="GO:0001942">
    <property type="term" value="P:hair follicle development"/>
    <property type="evidence" value="ECO:0000250"/>
    <property type="project" value="UniProtKB"/>
</dbReference>
<dbReference type="GO" id="GO:0002244">
    <property type="term" value="P:hematopoietic progenitor cell differentiation"/>
    <property type="evidence" value="ECO:0000250"/>
    <property type="project" value="UniProtKB"/>
</dbReference>
<dbReference type="GO" id="GO:0042541">
    <property type="term" value="P:hemoglobin biosynthetic process"/>
    <property type="evidence" value="ECO:0000250"/>
    <property type="project" value="UniProtKB"/>
</dbReference>
<dbReference type="GO" id="GO:0008584">
    <property type="term" value="P:male gonad development"/>
    <property type="evidence" value="ECO:0000250"/>
    <property type="project" value="UniProtKB"/>
</dbReference>
<dbReference type="GO" id="GO:0048333">
    <property type="term" value="P:mesodermal cell differentiation"/>
    <property type="evidence" value="ECO:0007669"/>
    <property type="project" value="Ensembl"/>
</dbReference>
<dbReference type="GO" id="GO:0030308">
    <property type="term" value="P:negative regulation of cell growth"/>
    <property type="evidence" value="ECO:0000250"/>
    <property type="project" value="UniProtKB"/>
</dbReference>
<dbReference type="GO" id="GO:0008285">
    <property type="term" value="P:negative regulation of cell population proliferation"/>
    <property type="evidence" value="ECO:0000250"/>
    <property type="project" value="UniProtKB"/>
</dbReference>
<dbReference type="GO" id="GO:2000134">
    <property type="term" value="P:negative regulation of G1/S transition of mitotic cell cycle"/>
    <property type="evidence" value="ECO:0000250"/>
    <property type="project" value="UniProtKB"/>
</dbReference>
<dbReference type="GO" id="GO:0051799">
    <property type="term" value="P:negative regulation of hair follicle development"/>
    <property type="evidence" value="ECO:0007669"/>
    <property type="project" value="Ensembl"/>
</dbReference>
<dbReference type="GO" id="GO:0042476">
    <property type="term" value="P:odontogenesis"/>
    <property type="evidence" value="ECO:0000250"/>
    <property type="project" value="UniProtKB"/>
</dbReference>
<dbReference type="GO" id="GO:0001541">
    <property type="term" value="P:ovarian follicle development"/>
    <property type="evidence" value="ECO:0000250"/>
    <property type="project" value="UniProtKB"/>
</dbReference>
<dbReference type="GO" id="GO:0045893">
    <property type="term" value="P:positive regulation of DNA-templated transcription"/>
    <property type="evidence" value="ECO:0000250"/>
    <property type="project" value="UniProtKB"/>
</dbReference>
<dbReference type="GO" id="GO:0045648">
    <property type="term" value="P:positive regulation of erythrocyte differentiation"/>
    <property type="evidence" value="ECO:0000250"/>
    <property type="project" value="UniProtKB"/>
</dbReference>
<dbReference type="GO" id="GO:2001241">
    <property type="term" value="P:positive regulation of extrinsic apoptotic signaling pathway in absence of ligand"/>
    <property type="evidence" value="ECO:0000250"/>
    <property type="project" value="UniProtKB"/>
</dbReference>
<dbReference type="GO" id="GO:0010628">
    <property type="term" value="P:positive regulation of gene expression"/>
    <property type="evidence" value="ECO:0007669"/>
    <property type="project" value="Ensembl"/>
</dbReference>
<dbReference type="GO" id="GO:0060279">
    <property type="term" value="P:positive regulation of ovulation"/>
    <property type="evidence" value="ECO:0000250"/>
    <property type="project" value="UniProtKB"/>
</dbReference>
<dbReference type="GO" id="GO:0051247">
    <property type="term" value="P:positive regulation of protein metabolic process"/>
    <property type="evidence" value="ECO:0007669"/>
    <property type="project" value="Ensembl"/>
</dbReference>
<dbReference type="GO" id="GO:0060391">
    <property type="term" value="P:positive regulation of SMAD protein signal transduction"/>
    <property type="evidence" value="ECO:0007669"/>
    <property type="project" value="Ensembl"/>
</dbReference>
<dbReference type="GO" id="GO:0045944">
    <property type="term" value="P:positive regulation of transcription by RNA polymerase II"/>
    <property type="evidence" value="ECO:0000250"/>
    <property type="project" value="UniProtKB"/>
</dbReference>
<dbReference type="GO" id="GO:0042701">
    <property type="term" value="P:progesterone secretion"/>
    <property type="evidence" value="ECO:0000250"/>
    <property type="project" value="UniProtKB"/>
</dbReference>
<dbReference type="GO" id="GO:0046880">
    <property type="term" value="P:regulation of follicle-stimulating hormone secretion"/>
    <property type="evidence" value="ECO:0000250"/>
    <property type="project" value="UniProtKB"/>
</dbReference>
<dbReference type="GO" id="GO:0006357">
    <property type="term" value="P:regulation of transcription by RNA polymerase II"/>
    <property type="evidence" value="ECO:0000250"/>
    <property type="project" value="UniProtKB"/>
</dbReference>
<dbReference type="GO" id="GO:0060021">
    <property type="term" value="P:roof of mouth development"/>
    <property type="evidence" value="ECO:0000250"/>
    <property type="project" value="UniProtKB"/>
</dbReference>
<dbReference type="GO" id="GO:0060008">
    <property type="term" value="P:Sertoli cell differentiation"/>
    <property type="evidence" value="ECO:0007669"/>
    <property type="project" value="Ensembl"/>
</dbReference>
<dbReference type="GO" id="GO:0021773">
    <property type="term" value="P:striatal medium spiny neuron differentiation"/>
    <property type="evidence" value="ECO:0007669"/>
    <property type="project" value="Ensembl"/>
</dbReference>
<dbReference type="GO" id="GO:0061370">
    <property type="term" value="P:testosterone biosynthetic process"/>
    <property type="evidence" value="ECO:0007669"/>
    <property type="project" value="Ensembl"/>
</dbReference>
<dbReference type="GO" id="GO:0006366">
    <property type="term" value="P:transcription by RNA polymerase II"/>
    <property type="evidence" value="ECO:0007669"/>
    <property type="project" value="Ensembl"/>
</dbReference>
<dbReference type="CDD" id="cd19404">
    <property type="entry name" value="TGF_beta_INHBA"/>
    <property type="match status" value="1"/>
</dbReference>
<dbReference type="FunFam" id="2.10.90.10:FF:000005">
    <property type="entry name" value="Inhibin beta A chain"/>
    <property type="match status" value="1"/>
</dbReference>
<dbReference type="FunFam" id="2.60.120.970:FF:000007">
    <property type="entry name" value="Inhibin beta A chain"/>
    <property type="match status" value="1"/>
</dbReference>
<dbReference type="Gene3D" id="2.60.120.970">
    <property type="match status" value="1"/>
</dbReference>
<dbReference type="Gene3D" id="2.10.90.10">
    <property type="entry name" value="Cystine-knot cytokines"/>
    <property type="match status" value="1"/>
</dbReference>
<dbReference type="InterPro" id="IPR029034">
    <property type="entry name" value="Cystine-knot_cytokine"/>
</dbReference>
<dbReference type="InterPro" id="IPR000491">
    <property type="entry name" value="Inhibin_betaA"/>
</dbReference>
<dbReference type="InterPro" id="IPR001839">
    <property type="entry name" value="TGF-b_C"/>
</dbReference>
<dbReference type="InterPro" id="IPR001111">
    <property type="entry name" value="TGF-b_propeptide"/>
</dbReference>
<dbReference type="InterPro" id="IPR015615">
    <property type="entry name" value="TGF-beta-rel"/>
</dbReference>
<dbReference type="InterPro" id="IPR017948">
    <property type="entry name" value="TGFb_CS"/>
</dbReference>
<dbReference type="PANTHER" id="PTHR11848:SF133">
    <property type="entry name" value="INHIBIN BETA A CHAIN"/>
    <property type="match status" value="1"/>
</dbReference>
<dbReference type="PANTHER" id="PTHR11848">
    <property type="entry name" value="TGF-BETA FAMILY"/>
    <property type="match status" value="1"/>
</dbReference>
<dbReference type="Pfam" id="PF00019">
    <property type="entry name" value="TGF_beta"/>
    <property type="match status" value="1"/>
</dbReference>
<dbReference type="Pfam" id="PF00688">
    <property type="entry name" value="TGFb_propeptide"/>
    <property type="match status" value="1"/>
</dbReference>
<dbReference type="PRINTS" id="PR00670">
    <property type="entry name" value="INHIBINBA"/>
</dbReference>
<dbReference type="SMART" id="SM00204">
    <property type="entry name" value="TGFB"/>
    <property type="match status" value="1"/>
</dbReference>
<dbReference type="SUPFAM" id="SSF57501">
    <property type="entry name" value="Cystine-knot cytokines"/>
    <property type="match status" value="1"/>
</dbReference>
<dbReference type="PROSITE" id="PS00250">
    <property type="entry name" value="TGF_BETA_1"/>
    <property type="match status" value="1"/>
</dbReference>
<dbReference type="PROSITE" id="PS51362">
    <property type="entry name" value="TGF_BETA_2"/>
    <property type="match status" value="1"/>
</dbReference>
<keyword id="KW-0165">Cleavage on pair of basic residues</keyword>
<keyword id="KW-0903">Direct protein sequencing</keyword>
<keyword id="KW-1015">Disulfide bond</keyword>
<keyword id="KW-0325">Glycoprotein</keyword>
<keyword id="KW-0339">Growth factor</keyword>
<keyword id="KW-0372">Hormone</keyword>
<keyword id="KW-1185">Reference proteome</keyword>
<keyword id="KW-0964">Secreted</keyword>
<keyword id="KW-0732">Signal</keyword>
<sequence length="424" mass="47476">MPLLWLRGFLLASCWIIVRSSPTPGSGGHSAAPDCPSCALATLPKDVPNSQPEMVEAVKKHILNMLHLKKRPDVTQPVPKAALLNAIRKLHVGKVGENGYVELEDDIGRRAEMNELMEQTSEIITFAEAGTARKTLRFEISKEGSDLSVVERAEIWLFLKVPKANRTRTKVSIRLFQQQRRPQGSADAGEEAEDVGFPEEKSEVLISEKVVDARKSTWHIFPVSSSIQRLLDQGKSALDIRTACEQCHETGASLVLLGKKKKKEEEAEGRKRDGEGAGVDEEKEQSHRPFLMLQARQSEEHPHRRRRRGLECDGKVNICCKKQFFVSFKDIGWNDWIIAPSGYHANYCEGECPSHIAGTSGSSLSFHSTVINHYRMRGHSPFANLKSCCVPTKLRPMSMLYYDDGQNIIKKDIQNMIVEECGCS</sequence>
<protein>
    <recommendedName>
        <fullName>Inhibin beta A chain</fullName>
    </recommendedName>
    <alternativeName>
        <fullName>Activin beta-A chain</fullName>
    </alternativeName>
</protein>
<accession>P03970</accession>
<proteinExistence type="evidence at protein level"/>
<feature type="signal peptide" evidence="1">
    <location>
        <begin position="1"/>
        <end position="20"/>
    </location>
</feature>
<feature type="propeptide" id="PRO_0000033712" evidence="5">
    <location>
        <begin position="21"/>
        <end position="308"/>
    </location>
</feature>
<feature type="chain" id="PRO_0000033713" description="Inhibin beta A chain">
    <location>
        <begin position="309"/>
        <end position="424"/>
    </location>
</feature>
<feature type="region of interest" description="Disordered" evidence="4">
    <location>
        <begin position="178"/>
        <end position="197"/>
    </location>
</feature>
<feature type="region of interest" description="Disordered" evidence="4">
    <location>
        <begin position="259"/>
        <end position="306"/>
    </location>
</feature>
<feature type="compositionally biased region" description="Acidic residues" evidence="4">
    <location>
        <begin position="188"/>
        <end position="197"/>
    </location>
</feature>
<feature type="compositionally biased region" description="Basic and acidic residues" evidence="4">
    <location>
        <begin position="263"/>
        <end position="275"/>
    </location>
</feature>
<feature type="glycosylation site" description="N-linked (GlcNAc...) asparagine" evidence="3">
    <location>
        <position position="165"/>
    </location>
</feature>
<feature type="disulfide bond" evidence="1">
    <location>
        <begin position="312"/>
        <end position="320"/>
    </location>
</feature>
<feature type="disulfide bond" evidence="1">
    <location>
        <begin position="319"/>
        <end position="389"/>
    </location>
</feature>
<feature type="disulfide bond" evidence="1">
    <location>
        <begin position="348"/>
        <end position="421"/>
    </location>
</feature>
<feature type="disulfide bond" evidence="1">
    <location>
        <begin position="352"/>
        <end position="423"/>
    </location>
</feature>
<feature type="disulfide bond" description="Interchain" evidence="1">
    <location>
        <position position="388"/>
    </location>
</feature>
<reference key="1">
    <citation type="journal article" date="1985" name="Nature">
        <title>Complementary DNA sequences of ovarian follicular fluid inhibin show precursor structure and homology with transforming growth factor-beta.</title>
        <authorList>
            <person name="Mason A.J."/>
            <person name="Hayflick J.S."/>
            <person name="Ling N."/>
            <person name="Esch F."/>
            <person name="Ueno N."/>
            <person name="Ying S.-Y."/>
            <person name="Guillemin R."/>
            <person name="Niall H."/>
            <person name="Seeburg P.H."/>
        </authorList>
    </citation>
    <scope>NUCLEOTIDE SEQUENCE [MRNA]</scope>
    <source>
        <tissue>Ovarian follicular fluid</tissue>
    </source>
</reference>
<reference key="2">
    <citation type="journal article" date="1992" name="J. Biol. Chem.">
        <title>Isolation and characterization of native activin B.</title>
        <authorList>
            <person name="Nakamura T."/>
            <person name="Asashima M."/>
            <person name="Eto Y."/>
            <person name="Takio K."/>
            <person name="Uchiyama H."/>
            <person name="Moriya N."/>
            <person name="Ariizumi T."/>
            <person name="Yashiro T."/>
            <person name="Sugino K."/>
            <person name="Titani K."/>
            <person name="Sugino H."/>
        </authorList>
    </citation>
    <scope>PROTEIN SEQUENCE OF 309-323</scope>
    <source>
        <tissue>Ovarian follicular fluid</tissue>
    </source>
</reference>
<organism>
    <name type="scientific">Sus scrofa</name>
    <name type="common">Pig</name>
    <dbReference type="NCBI Taxonomy" id="9823"/>
    <lineage>
        <taxon>Eukaryota</taxon>
        <taxon>Metazoa</taxon>
        <taxon>Chordata</taxon>
        <taxon>Craniata</taxon>
        <taxon>Vertebrata</taxon>
        <taxon>Euteleostomi</taxon>
        <taxon>Mammalia</taxon>
        <taxon>Eutheria</taxon>
        <taxon>Laurasiatheria</taxon>
        <taxon>Artiodactyla</taxon>
        <taxon>Suina</taxon>
        <taxon>Suidae</taxon>
        <taxon>Sus</taxon>
    </lineage>
</organism>
<gene>
    <name type="primary">INHBA</name>
</gene>